<feature type="chain" id="PRO_1000199386" description="Proline--tRNA ligase">
    <location>
        <begin position="1"/>
        <end position="566"/>
    </location>
</feature>
<protein>
    <recommendedName>
        <fullName evidence="1">Proline--tRNA ligase</fullName>
        <ecNumber evidence="1">6.1.1.15</ecNumber>
    </recommendedName>
    <alternativeName>
        <fullName evidence="1">Prolyl-tRNA synthetase</fullName>
        <shortName evidence="1">ProRS</shortName>
    </alternativeName>
</protein>
<organism>
    <name type="scientific">Exiguobacterium sibiricum (strain DSM 17290 / CCUG 55495 / CIP 109462 / JCM 13490 / 255-15)</name>
    <dbReference type="NCBI Taxonomy" id="262543"/>
    <lineage>
        <taxon>Bacteria</taxon>
        <taxon>Bacillati</taxon>
        <taxon>Bacillota</taxon>
        <taxon>Bacilli</taxon>
        <taxon>Bacillales</taxon>
        <taxon>Bacillales Family XII. Incertae Sedis</taxon>
        <taxon>Exiguobacterium</taxon>
    </lineage>
</organism>
<name>SYP_EXIS2</name>
<gene>
    <name evidence="1" type="primary">proS</name>
    <name type="ordered locus">Exig_1843</name>
</gene>
<sequence length="566" mass="63005">MKQSKLFMPTLREVPSDAEAISHQLLLRAGFMRQNAAGIYSYLPLAKRVLSKIETIIRQEMEGAGAQELLMPAIQPAELWEETGRWDIYGPELMRLTDRHDRRFALGATHEELITSIVRDELNSYKKLPVNLFQIQMKYRDERRPRFGLLRGREFIMKDAYSFHSTQESLEEEYQNMFDAYTKIFTRVGLEFRPVVADSGAIGGSGTHEFHALAAIGEDTIVYSDQSDYAANLEMAESVDQYTKQDKAPEALEEVHTGDAKTIEAVSSVLGLPEQESIKTVVFKTEQGLVMALVRGDHEVNDIKLKNYLGALDIMMATDEEIEQALHSTPGTLGPIGADMKIVADYAVRALTNSVCGANKSETHYVHVDPSRDFEAEYTDLRFVEEGDVSPDGQGHVKFARGIEVGQVFKLGTRYSEGMNATFLDEGGKAQPLIMGCYGIGVSRTMSAVVEQHYDERGIIWPKAIAPFDVHLIAVNGKNAEQLEVAETVYRELTAAGFSVLFDDRKERAGVKFADADLIGLPVRINVGKKAPDGIVELKARRGGEAEEIQQADLLEAVRSLYEGLQ</sequence>
<evidence type="ECO:0000255" key="1">
    <source>
        <dbReference type="HAMAP-Rule" id="MF_01569"/>
    </source>
</evidence>
<accession>B1YI68</accession>
<dbReference type="EC" id="6.1.1.15" evidence="1"/>
<dbReference type="EMBL" id="CP001022">
    <property type="protein sequence ID" value="ACB61295.1"/>
    <property type="molecule type" value="Genomic_DNA"/>
</dbReference>
<dbReference type="RefSeq" id="WP_012370713.1">
    <property type="nucleotide sequence ID" value="NC_010556.1"/>
</dbReference>
<dbReference type="SMR" id="B1YI68"/>
<dbReference type="STRING" id="262543.Exig_1843"/>
<dbReference type="KEGG" id="esi:Exig_1843"/>
<dbReference type="eggNOG" id="COG0442">
    <property type="taxonomic scope" value="Bacteria"/>
</dbReference>
<dbReference type="HOGENOM" id="CLU_016739_0_0_9"/>
<dbReference type="OrthoDB" id="9809052at2"/>
<dbReference type="Proteomes" id="UP000001681">
    <property type="component" value="Chromosome"/>
</dbReference>
<dbReference type="GO" id="GO:0005829">
    <property type="term" value="C:cytosol"/>
    <property type="evidence" value="ECO:0007669"/>
    <property type="project" value="TreeGrafter"/>
</dbReference>
<dbReference type="GO" id="GO:0002161">
    <property type="term" value="F:aminoacyl-tRNA deacylase activity"/>
    <property type="evidence" value="ECO:0007669"/>
    <property type="project" value="InterPro"/>
</dbReference>
<dbReference type="GO" id="GO:0005524">
    <property type="term" value="F:ATP binding"/>
    <property type="evidence" value="ECO:0007669"/>
    <property type="project" value="UniProtKB-UniRule"/>
</dbReference>
<dbReference type="GO" id="GO:0140096">
    <property type="term" value="F:catalytic activity, acting on a protein"/>
    <property type="evidence" value="ECO:0007669"/>
    <property type="project" value="UniProtKB-ARBA"/>
</dbReference>
<dbReference type="GO" id="GO:0004827">
    <property type="term" value="F:proline-tRNA ligase activity"/>
    <property type="evidence" value="ECO:0007669"/>
    <property type="project" value="UniProtKB-UniRule"/>
</dbReference>
<dbReference type="GO" id="GO:0016740">
    <property type="term" value="F:transferase activity"/>
    <property type="evidence" value="ECO:0007669"/>
    <property type="project" value="UniProtKB-ARBA"/>
</dbReference>
<dbReference type="GO" id="GO:0006433">
    <property type="term" value="P:prolyl-tRNA aminoacylation"/>
    <property type="evidence" value="ECO:0007669"/>
    <property type="project" value="UniProtKB-UniRule"/>
</dbReference>
<dbReference type="CDD" id="cd04334">
    <property type="entry name" value="ProRS-INS"/>
    <property type="match status" value="1"/>
</dbReference>
<dbReference type="CDD" id="cd00861">
    <property type="entry name" value="ProRS_anticodon_short"/>
    <property type="match status" value="1"/>
</dbReference>
<dbReference type="CDD" id="cd00779">
    <property type="entry name" value="ProRS_core_prok"/>
    <property type="match status" value="1"/>
</dbReference>
<dbReference type="FunFam" id="3.30.930.10:FF:000043">
    <property type="entry name" value="Proline--tRNA ligase"/>
    <property type="match status" value="1"/>
</dbReference>
<dbReference type="FunFam" id="3.40.50.800:FF:000011">
    <property type="entry name" value="Proline--tRNA ligase"/>
    <property type="match status" value="1"/>
</dbReference>
<dbReference type="Gene3D" id="3.40.50.800">
    <property type="entry name" value="Anticodon-binding domain"/>
    <property type="match status" value="1"/>
</dbReference>
<dbReference type="Gene3D" id="3.30.930.10">
    <property type="entry name" value="Bira Bifunctional Protein, Domain 2"/>
    <property type="match status" value="2"/>
</dbReference>
<dbReference type="HAMAP" id="MF_01569">
    <property type="entry name" value="Pro_tRNA_synth_type1"/>
    <property type="match status" value="1"/>
</dbReference>
<dbReference type="InterPro" id="IPR002314">
    <property type="entry name" value="aa-tRNA-synt_IIb"/>
</dbReference>
<dbReference type="InterPro" id="IPR006195">
    <property type="entry name" value="aa-tRNA-synth_II"/>
</dbReference>
<dbReference type="InterPro" id="IPR045864">
    <property type="entry name" value="aa-tRNA-synth_II/BPL/LPL"/>
</dbReference>
<dbReference type="InterPro" id="IPR004154">
    <property type="entry name" value="Anticodon-bd"/>
</dbReference>
<dbReference type="InterPro" id="IPR036621">
    <property type="entry name" value="Anticodon-bd_dom_sf"/>
</dbReference>
<dbReference type="InterPro" id="IPR002316">
    <property type="entry name" value="Pro-tRNA-ligase_IIa"/>
</dbReference>
<dbReference type="InterPro" id="IPR004500">
    <property type="entry name" value="Pro-tRNA-synth_IIa_bac-type"/>
</dbReference>
<dbReference type="InterPro" id="IPR023717">
    <property type="entry name" value="Pro-tRNA-Synthase_IIa_type1"/>
</dbReference>
<dbReference type="InterPro" id="IPR050062">
    <property type="entry name" value="Pro-tRNA_synthetase"/>
</dbReference>
<dbReference type="InterPro" id="IPR044140">
    <property type="entry name" value="ProRS_anticodon_short"/>
</dbReference>
<dbReference type="InterPro" id="IPR033730">
    <property type="entry name" value="ProRS_core_prok"/>
</dbReference>
<dbReference type="InterPro" id="IPR036754">
    <property type="entry name" value="YbaK/aa-tRNA-synt-asso_dom_sf"/>
</dbReference>
<dbReference type="InterPro" id="IPR007214">
    <property type="entry name" value="YbaK/aa-tRNA-synth-assoc-dom"/>
</dbReference>
<dbReference type="NCBIfam" id="NF006625">
    <property type="entry name" value="PRK09194.1"/>
    <property type="match status" value="1"/>
</dbReference>
<dbReference type="NCBIfam" id="TIGR00409">
    <property type="entry name" value="proS_fam_II"/>
    <property type="match status" value="1"/>
</dbReference>
<dbReference type="PANTHER" id="PTHR42753">
    <property type="entry name" value="MITOCHONDRIAL RIBOSOME PROTEIN L39/PROLYL-TRNA LIGASE FAMILY MEMBER"/>
    <property type="match status" value="1"/>
</dbReference>
<dbReference type="PANTHER" id="PTHR42753:SF2">
    <property type="entry name" value="PROLINE--TRNA LIGASE"/>
    <property type="match status" value="1"/>
</dbReference>
<dbReference type="Pfam" id="PF03129">
    <property type="entry name" value="HGTP_anticodon"/>
    <property type="match status" value="1"/>
</dbReference>
<dbReference type="Pfam" id="PF00587">
    <property type="entry name" value="tRNA-synt_2b"/>
    <property type="match status" value="1"/>
</dbReference>
<dbReference type="Pfam" id="PF04073">
    <property type="entry name" value="tRNA_edit"/>
    <property type="match status" value="1"/>
</dbReference>
<dbReference type="PIRSF" id="PIRSF001535">
    <property type="entry name" value="ProRS_1"/>
    <property type="match status" value="1"/>
</dbReference>
<dbReference type="PRINTS" id="PR01046">
    <property type="entry name" value="TRNASYNTHPRO"/>
</dbReference>
<dbReference type="SUPFAM" id="SSF52954">
    <property type="entry name" value="Class II aaRS ABD-related"/>
    <property type="match status" value="1"/>
</dbReference>
<dbReference type="SUPFAM" id="SSF55681">
    <property type="entry name" value="Class II aaRS and biotin synthetases"/>
    <property type="match status" value="1"/>
</dbReference>
<dbReference type="SUPFAM" id="SSF55826">
    <property type="entry name" value="YbaK/ProRS associated domain"/>
    <property type="match status" value="1"/>
</dbReference>
<dbReference type="PROSITE" id="PS50862">
    <property type="entry name" value="AA_TRNA_LIGASE_II"/>
    <property type="match status" value="1"/>
</dbReference>
<proteinExistence type="inferred from homology"/>
<comment type="function">
    <text evidence="1">Catalyzes the attachment of proline to tRNA(Pro) in a two-step reaction: proline is first activated by ATP to form Pro-AMP and then transferred to the acceptor end of tRNA(Pro). As ProRS can inadvertently accommodate and process non-cognate amino acids such as alanine and cysteine, to avoid such errors it has two additional distinct editing activities against alanine. One activity is designated as 'pretransfer' editing and involves the tRNA(Pro)-independent hydrolysis of activated Ala-AMP. The other activity is designated 'posttransfer' editing and involves deacylation of mischarged Ala-tRNA(Pro). The misacylated Cys-tRNA(Pro) is not edited by ProRS.</text>
</comment>
<comment type="catalytic activity">
    <reaction evidence="1">
        <text>tRNA(Pro) + L-proline + ATP = L-prolyl-tRNA(Pro) + AMP + diphosphate</text>
        <dbReference type="Rhea" id="RHEA:14305"/>
        <dbReference type="Rhea" id="RHEA-COMP:9700"/>
        <dbReference type="Rhea" id="RHEA-COMP:9702"/>
        <dbReference type="ChEBI" id="CHEBI:30616"/>
        <dbReference type="ChEBI" id="CHEBI:33019"/>
        <dbReference type="ChEBI" id="CHEBI:60039"/>
        <dbReference type="ChEBI" id="CHEBI:78442"/>
        <dbReference type="ChEBI" id="CHEBI:78532"/>
        <dbReference type="ChEBI" id="CHEBI:456215"/>
        <dbReference type="EC" id="6.1.1.15"/>
    </reaction>
</comment>
<comment type="subunit">
    <text evidence="1">Homodimer.</text>
</comment>
<comment type="subcellular location">
    <subcellularLocation>
        <location evidence="1">Cytoplasm</location>
    </subcellularLocation>
</comment>
<comment type="domain">
    <text evidence="1">Consists of three domains: the N-terminal catalytic domain, the editing domain and the C-terminal anticodon-binding domain.</text>
</comment>
<comment type="similarity">
    <text evidence="1">Belongs to the class-II aminoacyl-tRNA synthetase family. ProS type 1 subfamily.</text>
</comment>
<keyword id="KW-0030">Aminoacyl-tRNA synthetase</keyword>
<keyword id="KW-0067">ATP-binding</keyword>
<keyword id="KW-0963">Cytoplasm</keyword>
<keyword id="KW-0436">Ligase</keyword>
<keyword id="KW-0547">Nucleotide-binding</keyword>
<keyword id="KW-0648">Protein biosynthesis</keyword>
<keyword id="KW-1185">Reference proteome</keyword>
<reference key="1">
    <citation type="submission" date="2008-04" db="EMBL/GenBank/DDBJ databases">
        <title>Complete sequence of chromosome of Exiguobacterium sibiricum 255-15.</title>
        <authorList>
            <consortium name="US DOE Joint Genome Institute"/>
            <person name="Copeland A."/>
            <person name="Lucas S."/>
            <person name="Lapidus A."/>
            <person name="Glavina del Rio T."/>
            <person name="Dalin E."/>
            <person name="Tice H."/>
            <person name="Bruce D."/>
            <person name="Goodwin L."/>
            <person name="Pitluck S."/>
            <person name="Kiss H."/>
            <person name="Chertkov O."/>
            <person name="Monk C."/>
            <person name="Brettin T."/>
            <person name="Detter J.C."/>
            <person name="Han C."/>
            <person name="Kuske C.R."/>
            <person name="Schmutz J."/>
            <person name="Larimer F."/>
            <person name="Land M."/>
            <person name="Hauser L."/>
            <person name="Kyrpides N."/>
            <person name="Mikhailova N."/>
            <person name="Vishnivetskaya T."/>
            <person name="Rodrigues D.F."/>
            <person name="Gilichinsky D."/>
            <person name="Tiedje J."/>
            <person name="Richardson P."/>
        </authorList>
    </citation>
    <scope>NUCLEOTIDE SEQUENCE [LARGE SCALE GENOMIC DNA]</scope>
    <source>
        <strain>DSM 17290 / CCUG 55495 / CIP 109462 / JCM 13490 / 255-15</strain>
    </source>
</reference>